<keyword id="KW-0131">Cell cycle</keyword>
<keyword id="KW-0132">Cell division</keyword>
<keyword id="KW-0963">Cytoplasm</keyword>
<keyword id="KW-0717">Septation</keyword>
<accession>Q0HN71</accession>
<evidence type="ECO:0000255" key="1">
    <source>
        <dbReference type="HAMAP-Rule" id="MF_01092"/>
    </source>
</evidence>
<protein>
    <recommendedName>
        <fullName evidence="1">Cell division protein ZapD</fullName>
    </recommendedName>
    <alternativeName>
        <fullName evidence="1">Z ring-associated protein D</fullName>
    </alternativeName>
</protein>
<feature type="chain" id="PRO_1000064922" description="Cell division protein ZapD">
    <location>
        <begin position="1"/>
        <end position="244"/>
    </location>
</feature>
<proteinExistence type="inferred from homology"/>
<reference key="1">
    <citation type="submission" date="2006-08" db="EMBL/GenBank/DDBJ databases">
        <title>Complete sequence of Shewanella sp. MR-4.</title>
        <authorList>
            <consortium name="US DOE Joint Genome Institute"/>
            <person name="Copeland A."/>
            <person name="Lucas S."/>
            <person name="Lapidus A."/>
            <person name="Barry K."/>
            <person name="Detter J.C."/>
            <person name="Glavina del Rio T."/>
            <person name="Hammon N."/>
            <person name="Israni S."/>
            <person name="Dalin E."/>
            <person name="Tice H."/>
            <person name="Pitluck S."/>
            <person name="Kiss H."/>
            <person name="Brettin T."/>
            <person name="Bruce D."/>
            <person name="Han C."/>
            <person name="Tapia R."/>
            <person name="Gilna P."/>
            <person name="Schmutz J."/>
            <person name="Larimer F."/>
            <person name="Land M."/>
            <person name="Hauser L."/>
            <person name="Kyrpides N."/>
            <person name="Mikhailova N."/>
            <person name="Nealson K."/>
            <person name="Konstantinidis K."/>
            <person name="Klappenbach J."/>
            <person name="Tiedje J."/>
            <person name="Richardson P."/>
        </authorList>
    </citation>
    <scope>NUCLEOTIDE SEQUENCE [LARGE SCALE GENOMIC DNA]</scope>
    <source>
        <strain>MR-4</strain>
    </source>
</reference>
<sequence length="244" mass="28785">MTDLVYEQPLNEKIRSYLRLEYLNKQLGNNLNHDHQHRCFYPLFSLCELSERCDYRNEVLKDIERNLLQLGKWQELDHVDSEQIEFYIQSLTQAREQLQRPERCGSQLKQDRFLSALRQRFGMPGACCNFDLPQLHFWLAKPWEERQQDYQAWISHFDPLLTPITLLLQLTRSTAHFDNATAHAGFYQGDSAQALSLVRVRVDAAHGCYPTISGHRNRYAIHFVQFDQQRHSDRSIEFLLATCA</sequence>
<dbReference type="EMBL" id="CP000446">
    <property type="protein sequence ID" value="ABI37496.1"/>
    <property type="molecule type" value="Genomic_DNA"/>
</dbReference>
<dbReference type="RefSeq" id="WP_011621219.1">
    <property type="nucleotide sequence ID" value="NC_008321.1"/>
</dbReference>
<dbReference type="SMR" id="Q0HN71"/>
<dbReference type="KEGG" id="she:Shewmr4_0416"/>
<dbReference type="HOGENOM" id="CLU_076303_0_0_6"/>
<dbReference type="GO" id="GO:0032153">
    <property type="term" value="C:cell division site"/>
    <property type="evidence" value="ECO:0007669"/>
    <property type="project" value="TreeGrafter"/>
</dbReference>
<dbReference type="GO" id="GO:0005737">
    <property type="term" value="C:cytoplasm"/>
    <property type="evidence" value="ECO:0007669"/>
    <property type="project" value="UniProtKB-SubCell"/>
</dbReference>
<dbReference type="GO" id="GO:0000917">
    <property type="term" value="P:division septum assembly"/>
    <property type="evidence" value="ECO:0007669"/>
    <property type="project" value="UniProtKB-KW"/>
</dbReference>
<dbReference type="GO" id="GO:0043093">
    <property type="term" value="P:FtsZ-dependent cytokinesis"/>
    <property type="evidence" value="ECO:0007669"/>
    <property type="project" value="UniProtKB-UniRule"/>
</dbReference>
<dbReference type="Gene3D" id="1.10.3900.10">
    <property type="entry name" value="YacF-like"/>
    <property type="match status" value="1"/>
</dbReference>
<dbReference type="Gene3D" id="2.60.440.10">
    <property type="entry name" value="YacF-like domains"/>
    <property type="match status" value="1"/>
</dbReference>
<dbReference type="HAMAP" id="MF_01092">
    <property type="entry name" value="ZapD"/>
    <property type="match status" value="1"/>
</dbReference>
<dbReference type="InterPro" id="IPR009777">
    <property type="entry name" value="ZapD"/>
</dbReference>
<dbReference type="InterPro" id="IPR027462">
    <property type="entry name" value="ZapD_C"/>
</dbReference>
<dbReference type="InterPro" id="IPR036268">
    <property type="entry name" value="ZapD_sf"/>
</dbReference>
<dbReference type="NCBIfam" id="NF003654">
    <property type="entry name" value="PRK05287.1-2"/>
    <property type="match status" value="1"/>
</dbReference>
<dbReference type="NCBIfam" id="NF003655">
    <property type="entry name" value="PRK05287.1-3"/>
    <property type="match status" value="1"/>
</dbReference>
<dbReference type="PANTHER" id="PTHR39455">
    <property type="entry name" value="CELL DIVISION PROTEIN ZAPD"/>
    <property type="match status" value="1"/>
</dbReference>
<dbReference type="PANTHER" id="PTHR39455:SF1">
    <property type="entry name" value="CELL DIVISION PROTEIN ZAPD"/>
    <property type="match status" value="1"/>
</dbReference>
<dbReference type="Pfam" id="PF07072">
    <property type="entry name" value="ZapD"/>
    <property type="match status" value="1"/>
</dbReference>
<dbReference type="SUPFAM" id="SSF160950">
    <property type="entry name" value="YacF-like"/>
    <property type="match status" value="1"/>
</dbReference>
<name>ZAPD_SHESM</name>
<organism>
    <name type="scientific">Shewanella sp. (strain MR-4)</name>
    <dbReference type="NCBI Taxonomy" id="60480"/>
    <lineage>
        <taxon>Bacteria</taxon>
        <taxon>Pseudomonadati</taxon>
        <taxon>Pseudomonadota</taxon>
        <taxon>Gammaproteobacteria</taxon>
        <taxon>Alteromonadales</taxon>
        <taxon>Shewanellaceae</taxon>
        <taxon>Shewanella</taxon>
    </lineage>
</organism>
<gene>
    <name evidence="1" type="primary">zapD</name>
    <name type="ordered locus">Shewmr4_0416</name>
</gene>
<comment type="function">
    <text evidence="1">Cell division factor that enhances FtsZ-ring assembly. Directly interacts with FtsZ and promotes bundling of FtsZ protofilaments, with a reduction in FtsZ GTPase activity.</text>
</comment>
<comment type="subunit">
    <text evidence="1">Interacts with FtsZ.</text>
</comment>
<comment type="subcellular location">
    <subcellularLocation>
        <location evidence="1">Cytoplasm</location>
    </subcellularLocation>
    <text evidence="1">Localizes to mid-cell in an FtsZ-dependent manner.</text>
</comment>
<comment type="similarity">
    <text evidence="1">Belongs to the ZapD family.</text>
</comment>